<sequence>MQTLAGKKILLGISGGIAAYKCADLTRRLKERGAEVQVVMTKAAKEFITPLTMQAVSGRPVSDSLLDPAAEASMGHIELAKWADLILLAPATADLIARMAAGMGNDLLTTLVLATDAPVAVSPAMNQQMYRNVATQENIATLSRRGMEIWGPAAGEQACGDVGPGRMLEPMQLVALCEQFFQPKPLQDKSILITAGPTREAIDPVRYITNHSSGKMGYALAQAAMQLGANVTLVSGPVSLPTPVNVNRINVDSAQEMYDAVMAQASDHDIFISCAAVADYRPATIAEQKLKKTDDSDEMTITMVKNPDIVASVSAMTENRPFTVGFAAETNDVEVYARRKLEKKKLDLLCANDVSVEGQGFNSSDNAITLYWPQGEKALPLNSKAALSMEILKQIQTLMGH</sequence>
<gene>
    <name evidence="1" type="primary">coaBC</name>
    <name type="ordered locus">VV0283</name>
</gene>
<keyword id="KW-0210">Decarboxylase</keyword>
<keyword id="KW-0285">Flavoprotein</keyword>
<keyword id="KW-0288">FMN</keyword>
<keyword id="KW-0436">Ligase</keyword>
<keyword id="KW-0456">Lyase</keyword>
<keyword id="KW-0460">Magnesium</keyword>
<keyword id="KW-0479">Metal-binding</keyword>
<keyword id="KW-0511">Multifunctional enzyme</keyword>
<name>COABC_VIBVY</name>
<dbReference type="EC" id="4.1.1.36" evidence="1"/>
<dbReference type="EC" id="6.3.2.5" evidence="1"/>
<dbReference type="EMBL" id="BA000037">
    <property type="protein sequence ID" value="BAC93047.1"/>
    <property type="status" value="ALT_INIT"/>
    <property type="molecule type" value="Genomic_DNA"/>
</dbReference>
<dbReference type="RefSeq" id="WP_013572552.1">
    <property type="nucleotide sequence ID" value="NC_005139.1"/>
</dbReference>
<dbReference type="SMR" id="Q7MPS9"/>
<dbReference type="STRING" id="672.VV93_v1c02750"/>
<dbReference type="KEGG" id="vvy:VV0283"/>
<dbReference type="PATRIC" id="fig|196600.6.peg.318"/>
<dbReference type="eggNOG" id="COG0452">
    <property type="taxonomic scope" value="Bacteria"/>
</dbReference>
<dbReference type="HOGENOM" id="CLU_033319_0_1_6"/>
<dbReference type="UniPathway" id="UPA00241">
    <property type="reaction ID" value="UER00353"/>
</dbReference>
<dbReference type="UniPathway" id="UPA00241">
    <property type="reaction ID" value="UER00354"/>
</dbReference>
<dbReference type="Proteomes" id="UP000002675">
    <property type="component" value="Chromosome I"/>
</dbReference>
<dbReference type="GO" id="GO:0071513">
    <property type="term" value="C:phosphopantothenoylcysteine decarboxylase complex"/>
    <property type="evidence" value="ECO:0007669"/>
    <property type="project" value="TreeGrafter"/>
</dbReference>
<dbReference type="GO" id="GO:0010181">
    <property type="term" value="F:FMN binding"/>
    <property type="evidence" value="ECO:0007669"/>
    <property type="project" value="UniProtKB-UniRule"/>
</dbReference>
<dbReference type="GO" id="GO:0046872">
    <property type="term" value="F:metal ion binding"/>
    <property type="evidence" value="ECO:0007669"/>
    <property type="project" value="UniProtKB-KW"/>
</dbReference>
<dbReference type="GO" id="GO:0004632">
    <property type="term" value="F:phosphopantothenate--cysteine ligase activity"/>
    <property type="evidence" value="ECO:0007669"/>
    <property type="project" value="UniProtKB-UniRule"/>
</dbReference>
<dbReference type="GO" id="GO:0004633">
    <property type="term" value="F:phosphopantothenoylcysteine decarboxylase activity"/>
    <property type="evidence" value="ECO:0007669"/>
    <property type="project" value="UniProtKB-UniRule"/>
</dbReference>
<dbReference type="GO" id="GO:0015937">
    <property type="term" value="P:coenzyme A biosynthetic process"/>
    <property type="evidence" value="ECO:0007669"/>
    <property type="project" value="UniProtKB-UniRule"/>
</dbReference>
<dbReference type="GO" id="GO:0015941">
    <property type="term" value="P:pantothenate catabolic process"/>
    <property type="evidence" value="ECO:0007669"/>
    <property type="project" value="InterPro"/>
</dbReference>
<dbReference type="Gene3D" id="3.40.50.10300">
    <property type="entry name" value="CoaB-like"/>
    <property type="match status" value="1"/>
</dbReference>
<dbReference type="Gene3D" id="3.40.50.1950">
    <property type="entry name" value="Flavin prenyltransferase-like"/>
    <property type="match status" value="1"/>
</dbReference>
<dbReference type="HAMAP" id="MF_02225">
    <property type="entry name" value="CoaBC"/>
    <property type="match status" value="1"/>
</dbReference>
<dbReference type="InterPro" id="IPR035929">
    <property type="entry name" value="CoaB-like_sf"/>
</dbReference>
<dbReference type="InterPro" id="IPR005252">
    <property type="entry name" value="CoaBC"/>
</dbReference>
<dbReference type="InterPro" id="IPR007085">
    <property type="entry name" value="DNA/pantothenate-metab_flavo_C"/>
</dbReference>
<dbReference type="InterPro" id="IPR036551">
    <property type="entry name" value="Flavin_trans-like"/>
</dbReference>
<dbReference type="InterPro" id="IPR003382">
    <property type="entry name" value="Flavoprotein"/>
</dbReference>
<dbReference type="NCBIfam" id="TIGR00521">
    <property type="entry name" value="coaBC_dfp"/>
    <property type="match status" value="1"/>
</dbReference>
<dbReference type="PANTHER" id="PTHR14359">
    <property type="entry name" value="HOMO-OLIGOMERIC FLAVIN CONTAINING CYS DECARBOXYLASE FAMILY"/>
    <property type="match status" value="1"/>
</dbReference>
<dbReference type="PANTHER" id="PTHR14359:SF6">
    <property type="entry name" value="PHOSPHOPANTOTHENOYLCYSTEINE DECARBOXYLASE"/>
    <property type="match status" value="1"/>
</dbReference>
<dbReference type="Pfam" id="PF04127">
    <property type="entry name" value="DFP"/>
    <property type="match status" value="1"/>
</dbReference>
<dbReference type="Pfam" id="PF02441">
    <property type="entry name" value="Flavoprotein"/>
    <property type="match status" value="1"/>
</dbReference>
<dbReference type="SUPFAM" id="SSF102645">
    <property type="entry name" value="CoaB-like"/>
    <property type="match status" value="1"/>
</dbReference>
<dbReference type="SUPFAM" id="SSF52507">
    <property type="entry name" value="Homo-oligomeric flavin-containing Cys decarboxylases, HFCD"/>
    <property type="match status" value="1"/>
</dbReference>
<organism>
    <name type="scientific">Vibrio vulnificus (strain YJ016)</name>
    <dbReference type="NCBI Taxonomy" id="196600"/>
    <lineage>
        <taxon>Bacteria</taxon>
        <taxon>Pseudomonadati</taxon>
        <taxon>Pseudomonadota</taxon>
        <taxon>Gammaproteobacteria</taxon>
        <taxon>Vibrionales</taxon>
        <taxon>Vibrionaceae</taxon>
        <taxon>Vibrio</taxon>
    </lineage>
</organism>
<protein>
    <recommendedName>
        <fullName evidence="1">Coenzyme A biosynthesis bifunctional protein CoaBC</fullName>
    </recommendedName>
    <alternativeName>
        <fullName evidence="1">DNA/pantothenate metabolism flavoprotein</fullName>
    </alternativeName>
    <alternativeName>
        <fullName evidence="1">Phosphopantothenoylcysteine synthetase/decarboxylase</fullName>
        <shortName evidence="1">PPCS-PPCDC</shortName>
    </alternativeName>
    <domain>
        <recommendedName>
            <fullName evidence="1">Phosphopantothenoylcysteine decarboxylase</fullName>
            <shortName evidence="1">PPC decarboxylase</shortName>
            <shortName evidence="1">PPC-DC</shortName>
            <ecNumber evidence="1">4.1.1.36</ecNumber>
        </recommendedName>
        <alternativeName>
            <fullName evidence="1">CoaC</fullName>
        </alternativeName>
    </domain>
    <domain>
        <recommendedName>
            <fullName evidence="1">Phosphopantothenate--cysteine ligase</fullName>
            <ecNumber evidence="1">6.3.2.5</ecNumber>
        </recommendedName>
        <alternativeName>
            <fullName evidence="1">CoaB</fullName>
        </alternativeName>
        <alternativeName>
            <fullName evidence="1">Phosphopantothenoylcysteine synthetase</fullName>
            <shortName evidence="1">PPC synthetase</shortName>
            <shortName evidence="1">PPC-S</shortName>
        </alternativeName>
    </domain>
</protein>
<proteinExistence type="inferred from homology"/>
<reference key="1">
    <citation type="journal article" date="2003" name="Genome Res.">
        <title>Comparative genome analysis of Vibrio vulnificus, a marine pathogen.</title>
        <authorList>
            <person name="Chen C.-Y."/>
            <person name="Wu K.-M."/>
            <person name="Chang Y.-C."/>
            <person name="Chang C.-H."/>
            <person name="Tsai H.-C."/>
            <person name="Liao T.-L."/>
            <person name="Liu Y.-M."/>
            <person name="Chen H.-J."/>
            <person name="Shen A.B.-T."/>
            <person name="Li J.-C."/>
            <person name="Su T.-L."/>
            <person name="Shao C.-P."/>
            <person name="Lee C.-T."/>
            <person name="Hor L.-I."/>
            <person name="Tsai S.-F."/>
        </authorList>
    </citation>
    <scope>NUCLEOTIDE SEQUENCE [LARGE SCALE GENOMIC DNA]</scope>
    <source>
        <strain>YJ016</strain>
    </source>
</reference>
<feature type="chain" id="PRO_0000182028" description="Coenzyme A biosynthesis bifunctional protein CoaBC">
    <location>
        <begin position="1"/>
        <end position="401"/>
    </location>
</feature>
<feature type="region of interest" description="Phosphopantothenoylcysteine decarboxylase" evidence="1">
    <location>
        <begin position="1"/>
        <end position="190"/>
    </location>
</feature>
<feature type="region of interest" description="Phosphopantothenate--cysteine ligase" evidence="1">
    <location>
        <begin position="191"/>
        <end position="401"/>
    </location>
</feature>
<feature type="active site" description="Proton donor" evidence="1">
    <location>
        <position position="159"/>
    </location>
</feature>
<feature type="binding site" evidence="1">
    <location>
        <position position="279"/>
    </location>
    <ligand>
        <name>CTP</name>
        <dbReference type="ChEBI" id="CHEBI:37563"/>
    </ligand>
</feature>
<feature type="binding site" evidence="1">
    <location>
        <position position="289"/>
    </location>
    <ligand>
        <name>CTP</name>
        <dbReference type="ChEBI" id="CHEBI:37563"/>
    </ligand>
</feature>
<feature type="binding site" evidence="1">
    <location>
        <begin position="307"/>
        <end position="310"/>
    </location>
    <ligand>
        <name>CTP</name>
        <dbReference type="ChEBI" id="CHEBI:37563"/>
    </ligand>
</feature>
<feature type="binding site" evidence="1">
    <location>
        <position position="326"/>
    </location>
    <ligand>
        <name>CTP</name>
        <dbReference type="ChEBI" id="CHEBI:37563"/>
    </ligand>
</feature>
<feature type="binding site" evidence="1">
    <location>
        <position position="340"/>
    </location>
    <ligand>
        <name>CTP</name>
        <dbReference type="ChEBI" id="CHEBI:37563"/>
    </ligand>
</feature>
<feature type="binding site" evidence="1">
    <location>
        <position position="344"/>
    </location>
    <ligand>
        <name>CTP</name>
        <dbReference type="ChEBI" id="CHEBI:37563"/>
    </ligand>
</feature>
<comment type="function">
    <text evidence="1">Catalyzes two sequential steps in the biosynthesis of coenzyme A. In the first step cysteine is conjugated to 4'-phosphopantothenate to form 4-phosphopantothenoylcysteine. In the second step the latter compound is decarboxylated to form 4'-phosphopantotheine.</text>
</comment>
<comment type="catalytic activity">
    <reaction evidence="1">
        <text>N-[(R)-4-phosphopantothenoyl]-L-cysteine + H(+) = (R)-4'-phosphopantetheine + CO2</text>
        <dbReference type="Rhea" id="RHEA:16793"/>
        <dbReference type="ChEBI" id="CHEBI:15378"/>
        <dbReference type="ChEBI" id="CHEBI:16526"/>
        <dbReference type="ChEBI" id="CHEBI:59458"/>
        <dbReference type="ChEBI" id="CHEBI:61723"/>
        <dbReference type="EC" id="4.1.1.36"/>
    </reaction>
</comment>
<comment type="catalytic activity">
    <reaction evidence="1">
        <text>(R)-4'-phosphopantothenate + L-cysteine + CTP = N-[(R)-4-phosphopantothenoyl]-L-cysteine + CMP + diphosphate + H(+)</text>
        <dbReference type="Rhea" id="RHEA:19397"/>
        <dbReference type="ChEBI" id="CHEBI:10986"/>
        <dbReference type="ChEBI" id="CHEBI:15378"/>
        <dbReference type="ChEBI" id="CHEBI:33019"/>
        <dbReference type="ChEBI" id="CHEBI:35235"/>
        <dbReference type="ChEBI" id="CHEBI:37563"/>
        <dbReference type="ChEBI" id="CHEBI:59458"/>
        <dbReference type="ChEBI" id="CHEBI:60377"/>
        <dbReference type="EC" id="6.3.2.5"/>
    </reaction>
</comment>
<comment type="cofactor">
    <cofactor evidence="1">
        <name>Mg(2+)</name>
        <dbReference type="ChEBI" id="CHEBI:18420"/>
    </cofactor>
</comment>
<comment type="cofactor">
    <cofactor evidence="1">
        <name>FMN</name>
        <dbReference type="ChEBI" id="CHEBI:58210"/>
    </cofactor>
    <text evidence="1">Binds 1 FMN per subunit.</text>
</comment>
<comment type="pathway">
    <text evidence="1">Cofactor biosynthesis; coenzyme A biosynthesis; CoA from (R)-pantothenate: step 2/5.</text>
</comment>
<comment type="pathway">
    <text evidence="1">Cofactor biosynthesis; coenzyme A biosynthesis; CoA from (R)-pantothenate: step 3/5.</text>
</comment>
<comment type="similarity">
    <text evidence="1">In the N-terminal section; belongs to the HFCD (homo-oligomeric flavin containing Cys decarboxylase) superfamily.</text>
</comment>
<comment type="similarity">
    <text evidence="1">In the C-terminal section; belongs to the PPC synthetase family.</text>
</comment>
<comment type="sequence caution" evidence="2">
    <conflict type="erroneous initiation">
        <sequence resource="EMBL-CDS" id="BAC93047"/>
    </conflict>
</comment>
<evidence type="ECO:0000255" key="1">
    <source>
        <dbReference type="HAMAP-Rule" id="MF_02225"/>
    </source>
</evidence>
<evidence type="ECO:0000305" key="2"/>
<accession>Q7MPS9</accession>